<reference key="1">
    <citation type="journal article" date="1990" name="Mol. Cell. Biol.">
        <title>The phenotype of the minichromosome maintenance mutant mcm3 is characteristic of mutants defective in DNA replication.</title>
        <authorList>
            <person name="Gibson S.T."/>
            <person name="Suroski R.T."/>
            <person name="Tye B.K."/>
        </authorList>
    </citation>
    <scope>NUCLEOTIDE SEQUENCE [GENOMIC DNA]</scope>
</reference>
<reference key="2">
    <citation type="journal article" date="1997" name="Nature">
        <title>The nucleotide sequence of Saccharomyces cerevisiae chromosome V.</title>
        <authorList>
            <person name="Dietrich F.S."/>
            <person name="Mulligan J.T."/>
            <person name="Hennessy K.M."/>
            <person name="Yelton M.A."/>
            <person name="Allen E."/>
            <person name="Araujo R."/>
            <person name="Aviles E."/>
            <person name="Berno A."/>
            <person name="Brennan T."/>
            <person name="Carpenter J."/>
            <person name="Chen E."/>
            <person name="Cherry J.M."/>
            <person name="Chung E."/>
            <person name="Duncan M."/>
            <person name="Guzman E."/>
            <person name="Hartzell G."/>
            <person name="Hunicke-Smith S."/>
            <person name="Hyman R.W."/>
            <person name="Kayser A."/>
            <person name="Komp C."/>
            <person name="Lashkari D."/>
            <person name="Lew H."/>
            <person name="Lin D."/>
            <person name="Mosedale D."/>
            <person name="Nakahara K."/>
            <person name="Namath A."/>
            <person name="Norgren R."/>
            <person name="Oefner P."/>
            <person name="Oh C."/>
            <person name="Petel F.X."/>
            <person name="Roberts D."/>
            <person name="Sehl P."/>
            <person name="Schramm S."/>
            <person name="Shogren T."/>
            <person name="Smith V."/>
            <person name="Taylor P."/>
            <person name="Wei Y."/>
            <person name="Botstein D."/>
            <person name="Davis R.W."/>
        </authorList>
    </citation>
    <scope>NUCLEOTIDE SEQUENCE [LARGE SCALE GENOMIC DNA]</scope>
    <source>
        <strain>ATCC 204508 / S288c</strain>
    </source>
</reference>
<reference key="3">
    <citation type="journal article" date="2007" name="J. Proteome Res.">
        <title>Large-scale phosphorylation analysis of alpha-factor-arrested Saccharomyces cerevisiae.</title>
        <authorList>
            <person name="Li X."/>
            <person name="Gerber S.A."/>
            <person name="Rudner A.D."/>
            <person name="Beausoleil S.A."/>
            <person name="Haas W."/>
            <person name="Villen J."/>
            <person name="Elias J.E."/>
            <person name="Gygi S.P."/>
        </authorList>
    </citation>
    <scope>PHOSPHORYLATION [LARGE SCALE ANALYSIS] AT THR-868</scope>
    <scope>IDENTIFICATION BY MASS SPECTROMETRY [LARGE SCALE ANALYSIS]</scope>
    <source>
        <strain>ADR376</strain>
    </source>
</reference>
<reference key="4">
    <citation type="journal article" date="2007" name="Proc. Natl. Acad. Sci. U.S.A.">
        <title>Analysis of phosphorylation sites on proteins from Saccharomyces cerevisiae by electron transfer dissociation (ETD) mass spectrometry.</title>
        <authorList>
            <person name="Chi A."/>
            <person name="Huttenhower C."/>
            <person name="Geer L.Y."/>
            <person name="Coon J.J."/>
            <person name="Syka J.E.P."/>
            <person name="Bai D.L."/>
            <person name="Shabanowitz J."/>
            <person name="Burke D.J."/>
            <person name="Troyanskaya O.G."/>
            <person name="Hunt D.F."/>
        </authorList>
    </citation>
    <scope>PHOSPHORYLATION [LARGE SCALE ANALYSIS] AT SER-777 AND SER-781</scope>
    <scope>IDENTIFICATION BY MASS SPECTROMETRY [LARGE SCALE ANALYSIS]</scope>
</reference>
<reference key="5">
    <citation type="journal article" date="2008" name="Mol. Cell">
        <title>The Mcm2-7 complex has in vitro helicase activity.</title>
        <authorList>
            <person name="Bochman M.L."/>
            <person name="Schwacha A."/>
        </authorList>
    </citation>
    <scope>RECONSTITUTION OF THE MCM2-7 COMPLEX</scope>
    <scope>HELICASE ACTIVITY OF THE MCM2-7 COMPLEX</scope>
    <scope>MUTAGENESIS OF LYS-415</scope>
</reference>
<reference key="6">
    <citation type="journal article" date="2008" name="Mol. Cell. Proteomics">
        <title>A multidimensional chromatography technology for in-depth phosphoproteome analysis.</title>
        <authorList>
            <person name="Albuquerque C.P."/>
            <person name="Smolka M.B."/>
            <person name="Payne S.H."/>
            <person name="Bafna V."/>
            <person name="Eng J."/>
            <person name="Zhou H."/>
        </authorList>
    </citation>
    <scope>IDENTIFICATION BY MASS SPECTROMETRY [LARGE SCALE ANALYSIS]</scope>
</reference>
<reference key="7">
    <citation type="journal article" date="2009" name="Cell">
        <title>Concerted loading of Mcm2-7 double hexamers around DNA during DNA replication origin licensing.</title>
        <authorList>
            <person name="Remus D."/>
            <person name="Beuron F."/>
            <person name="Tolun G."/>
            <person name="Griffith J.D."/>
            <person name="Morris E.P."/>
            <person name="Diffley J.F."/>
        </authorList>
    </citation>
    <scope>IDENTIFICATION IN THE MCM2-7 COMPLEX</scope>
    <scope>FUNCTION OF THE MCM2-7 COMPLEX</scope>
    <scope>ELECTRON MICROSCOPY OF THE MCM2-7 COMPLEX</scope>
</reference>
<reference key="8">
    <citation type="journal article" date="2009" name="Proc. Natl. Acad. Sci. U.S.A.">
        <title>A double-hexameric MCM2-7 complex is loaded onto origin DNA during licensing of eukaryotic DNA replication.</title>
        <authorList>
            <person name="Evrin C."/>
            <person name="Clarke P."/>
            <person name="Zech J."/>
            <person name="Lurz R."/>
            <person name="Sun J."/>
            <person name="Uhle S."/>
            <person name="Li H."/>
            <person name="Stillman B."/>
            <person name="Speck C."/>
        </authorList>
    </citation>
    <scope>IDENTIFICATION IN THE MCM2-7 COMPLEX</scope>
    <scope>FUNCTION OF THE MCM2-7 COMPLEX</scope>
    <scope>ELECTRON MICROSCOPY OF THE MCM2-7 COMPLEX</scope>
</reference>
<reference key="9">
    <citation type="journal article" date="2014" name="G3 (Bethesda)">
        <title>The reference genome sequence of Saccharomyces cerevisiae: Then and now.</title>
        <authorList>
            <person name="Engel S.R."/>
            <person name="Dietrich F.S."/>
            <person name="Fisk D.G."/>
            <person name="Binkley G."/>
            <person name="Balakrishnan R."/>
            <person name="Costanzo M.C."/>
            <person name="Dwight S.S."/>
            <person name="Hitz B.C."/>
            <person name="Karra K."/>
            <person name="Nash R.S."/>
            <person name="Weng S."/>
            <person name="Wong E.D."/>
            <person name="Lloyd P."/>
            <person name="Skrzypek M.S."/>
            <person name="Miyasato S.R."/>
            <person name="Simison M."/>
            <person name="Cherry J.M."/>
        </authorList>
    </citation>
    <scope>GENOME REANNOTATION</scope>
    <source>
        <strain>ATCC 204508 / S288c</strain>
    </source>
</reference>
<reference key="10">
    <citation type="journal article" date="2003" name="Nature">
        <title>Global analysis of protein expression in yeast.</title>
        <authorList>
            <person name="Ghaemmaghami S."/>
            <person name="Huh W.-K."/>
            <person name="Bower K."/>
            <person name="Howson R.W."/>
            <person name="Belle A."/>
            <person name="Dephoure N."/>
            <person name="O'Shea E.K."/>
            <person name="Weissman J.S."/>
        </authorList>
    </citation>
    <scope>LEVEL OF PROTEIN EXPRESSION [LARGE SCALE ANALYSIS]</scope>
</reference>
<reference key="11">
    <citation type="journal article" date="2004" name="Exp. Cell Res.">
        <title>Saccharomyces cerevisiae CSM1 gene encoding a protein influencing chromosome segregation in meiosis I interacts with elements of the DNA replication complex.</title>
        <authorList>
            <person name="Wysocka M."/>
            <person name="Rytka J."/>
            <person name="Kurlandzka A."/>
        </authorList>
    </citation>
    <scope>INTERACTION WITH CSM1</scope>
</reference>
<reference key="12">
    <citation type="journal article" date="2009" name="Science">
        <title>Global analysis of Cdk1 substrate phosphorylation sites provides insights into evolution.</title>
        <authorList>
            <person name="Holt L.J."/>
            <person name="Tuch B.B."/>
            <person name="Villen J."/>
            <person name="Johnson A.D."/>
            <person name="Gygi S.P."/>
            <person name="Morgan D.O."/>
        </authorList>
    </citation>
    <scope>PHOSPHORYLATION [LARGE SCALE ANALYSIS] AT SER-761 AND SER-781</scope>
    <scope>IDENTIFICATION BY MASS SPECTROMETRY [LARGE SCALE ANALYSIS]</scope>
</reference>
<accession>P24279</accession>
<accession>D3DLL7</accession>
<name>MCM3_YEAST</name>
<dbReference type="EC" id="3.6.4.12"/>
<dbReference type="EMBL" id="X53540">
    <property type="protein sequence ID" value="CAA37616.1"/>
    <property type="molecule type" value="Genomic_DNA"/>
</dbReference>
<dbReference type="EMBL" id="U18779">
    <property type="protein sequence ID" value="AAB65010.1"/>
    <property type="molecule type" value="Genomic_DNA"/>
</dbReference>
<dbReference type="EMBL" id="BK006939">
    <property type="protein sequence ID" value="DAA07621.1"/>
    <property type="molecule type" value="Genomic_DNA"/>
</dbReference>
<dbReference type="PIR" id="A36376">
    <property type="entry name" value="A36376"/>
</dbReference>
<dbReference type="RefSeq" id="NP_010882.1">
    <property type="nucleotide sequence ID" value="NM_001178847.1"/>
</dbReference>
<dbReference type="PDB" id="3JA8">
    <property type="method" value="EM"/>
    <property type="resolution" value="3.80 A"/>
    <property type="chains" value="3=1-971"/>
</dbReference>
<dbReference type="PDB" id="3JC5">
    <property type="method" value="EM"/>
    <property type="resolution" value="4.70 A"/>
    <property type="chains" value="3=1-971"/>
</dbReference>
<dbReference type="PDB" id="3JC6">
    <property type="method" value="EM"/>
    <property type="resolution" value="3.70 A"/>
    <property type="chains" value="3=1-971"/>
</dbReference>
<dbReference type="PDB" id="3JC7">
    <property type="method" value="EM"/>
    <property type="resolution" value="4.80 A"/>
    <property type="chains" value="3=1-971"/>
</dbReference>
<dbReference type="PDB" id="5BK4">
    <property type="method" value="EM"/>
    <property type="resolution" value="3.90 A"/>
    <property type="chains" value="3/B=1-971"/>
</dbReference>
<dbReference type="PDB" id="5U8S">
    <property type="method" value="EM"/>
    <property type="resolution" value="6.10 A"/>
    <property type="chains" value="3=1-971"/>
</dbReference>
<dbReference type="PDB" id="5U8T">
    <property type="method" value="EM"/>
    <property type="resolution" value="4.90 A"/>
    <property type="chains" value="3=1-971"/>
</dbReference>
<dbReference type="PDB" id="5V8F">
    <property type="method" value="EM"/>
    <property type="resolution" value="3.90 A"/>
    <property type="chains" value="3=1-971"/>
</dbReference>
<dbReference type="PDB" id="5XF8">
    <property type="method" value="EM"/>
    <property type="resolution" value="7.10 A"/>
    <property type="chains" value="3=1-971"/>
</dbReference>
<dbReference type="PDB" id="6EYC">
    <property type="method" value="EM"/>
    <property type="resolution" value="3.80 A"/>
    <property type="chains" value="3=1-971"/>
</dbReference>
<dbReference type="PDB" id="6F0L">
    <property type="method" value="EM"/>
    <property type="resolution" value="4.77 A"/>
    <property type="chains" value="3/B=1-971"/>
</dbReference>
<dbReference type="PDB" id="6HV9">
    <property type="method" value="EM"/>
    <property type="resolution" value="4.98 A"/>
    <property type="chains" value="3=1-971"/>
</dbReference>
<dbReference type="PDB" id="6PTJ">
    <property type="method" value="EM"/>
    <property type="resolution" value="3.80 A"/>
    <property type="chains" value="3=1-971"/>
</dbReference>
<dbReference type="PDB" id="6PTN">
    <property type="method" value="EM"/>
    <property type="resolution" value="5.80 A"/>
    <property type="chains" value="3/j=1-971"/>
</dbReference>
<dbReference type="PDB" id="6PTO">
    <property type="method" value="EM"/>
    <property type="resolution" value="7.00 A"/>
    <property type="chains" value="3/G/i=1-971"/>
</dbReference>
<dbReference type="PDB" id="6RQC">
    <property type="method" value="EM"/>
    <property type="resolution" value="4.40 A"/>
    <property type="chains" value="3=1-971"/>
</dbReference>
<dbReference type="PDB" id="6SKL">
    <property type="method" value="EM"/>
    <property type="resolution" value="3.70 A"/>
    <property type="chains" value="3=1-971"/>
</dbReference>
<dbReference type="PDB" id="6SKO">
    <property type="method" value="EM"/>
    <property type="resolution" value="3.40 A"/>
    <property type="chains" value="3=1-971"/>
</dbReference>
<dbReference type="PDB" id="6U0M">
    <property type="method" value="EM"/>
    <property type="resolution" value="3.90 A"/>
    <property type="chains" value="3=17-738"/>
</dbReference>
<dbReference type="PDB" id="6WGC">
    <property type="method" value="EM"/>
    <property type="resolution" value="4.30 A"/>
    <property type="chains" value="3=1-971"/>
</dbReference>
<dbReference type="PDB" id="6WGF">
    <property type="method" value="EM"/>
    <property type="resolution" value="7.70 A"/>
    <property type="chains" value="3=1-971"/>
</dbReference>
<dbReference type="PDB" id="6WGG">
    <property type="method" value="EM"/>
    <property type="resolution" value="8.10 A"/>
    <property type="chains" value="3=1-971"/>
</dbReference>
<dbReference type="PDB" id="6WGI">
    <property type="method" value="EM"/>
    <property type="resolution" value="10.00 A"/>
    <property type="chains" value="3=1-971"/>
</dbReference>
<dbReference type="PDB" id="7P30">
    <property type="method" value="EM"/>
    <property type="resolution" value="3.00 A"/>
    <property type="chains" value="3/B=1-971"/>
</dbReference>
<dbReference type="PDB" id="7P5Z">
    <property type="method" value="EM"/>
    <property type="resolution" value="3.30 A"/>
    <property type="chains" value="3/B=1-971"/>
</dbReference>
<dbReference type="PDB" id="7PMK">
    <property type="method" value="EM"/>
    <property type="resolution" value="3.20 A"/>
    <property type="chains" value="3=1-971"/>
</dbReference>
<dbReference type="PDB" id="7PMN">
    <property type="method" value="EM"/>
    <property type="resolution" value="3.20 A"/>
    <property type="chains" value="3=1-971"/>
</dbReference>
<dbReference type="PDB" id="7PT6">
    <property type="method" value="EM"/>
    <property type="resolution" value="3.20 A"/>
    <property type="chains" value="3/C=1-971"/>
</dbReference>
<dbReference type="PDB" id="7PT7">
    <property type="method" value="EM"/>
    <property type="resolution" value="3.80 A"/>
    <property type="chains" value="3/C=1-971"/>
</dbReference>
<dbReference type="PDB" id="7QHS">
    <property type="method" value="EM"/>
    <property type="resolution" value="3.30 A"/>
    <property type="chains" value="3=1-971"/>
</dbReference>
<dbReference type="PDB" id="7V3U">
    <property type="method" value="EM"/>
    <property type="resolution" value="3.20 A"/>
    <property type="chains" value="3/C=1-971"/>
</dbReference>
<dbReference type="PDB" id="7V3V">
    <property type="method" value="EM"/>
    <property type="resolution" value="2.90 A"/>
    <property type="chains" value="3/C=1-971"/>
</dbReference>
<dbReference type="PDB" id="7W8G">
    <property type="method" value="EM"/>
    <property type="resolution" value="2.52 A"/>
    <property type="chains" value="3/C=1-971"/>
</dbReference>
<dbReference type="PDB" id="7Z13">
    <property type="method" value="EM"/>
    <property type="resolution" value="3.40 A"/>
    <property type="chains" value="3/b=1-971"/>
</dbReference>
<dbReference type="PDB" id="8B9A">
    <property type="method" value="EM"/>
    <property type="resolution" value="3.50 A"/>
    <property type="chains" value="3=1-971"/>
</dbReference>
<dbReference type="PDB" id="8B9B">
    <property type="method" value="EM"/>
    <property type="resolution" value="3.50 A"/>
    <property type="chains" value="3=1-971"/>
</dbReference>
<dbReference type="PDB" id="8B9C">
    <property type="method" value="EM"/>
    <property type="resolution" value="4.60 A"/>
    <property type="chains" value="3=1-971"/>
</dbReference>
<dbReference type="PDB" id="8KG6">
    <property type="method" value="EM"/>
    <property type="resolution" value="3.07 A"/>
    <property type="chains" value="3=1-971"/>
</dbReference>
<dbReference type="PDB" id="8KG8">
    <property type="method" value="EM"/>
    <property type="resolution" value="4.23 A"/>
    <property type="chains" value="3=1-971"/>
</dbReference>
<dbReference type="PDB" id="8KG9">
    <property type="method" value="EM"/>
    <property type="resolution" value="4.52 A"/>
    <property type="chains" value="3=1-971"/>
</dbReference>
<dbReference type="PDB" id="8P5E">
    <property type="method" value="EM"/>
    <property type="resolution" value="3.90 A"/>
    <property type="chains" value="3=1-971"/>
</dbReference>
<dbReference type="PDB" id="8P62">
    <property type="method" value="EM"/>
    <property type="resolution" value="3.90 A"/>
    <property type="chains" value="3=1-971"/>
</dbReference>
<dbReference type="PDB" id="8P63">
    <property type="method" value="EM"/>
    <property type="resolution" value="3.70 A"/>
    <property type="chains" value="3=1-971"/>
</dbReference>
<dbReference type="PDB" id="8RIF">
    <property type="method" value="EM"/>
    <property type="resolution" value="2.79 A"/>
    <property type="chains" value="3/B=1-971"/>
</dbReference>
<dbReference type="PDB" id="8RIG">
    <property type="method" value="EM"/>
    <property type="resolution" value="3.41 A"/>
    <property type="chains" value="3=1-971"/>
</dbReference>
<dbReference type="PDB" id="8W7M">
    <property type="method" value="EM"/>
    <property type="resolution" value="4.12 A"/>
    <property type="chains" value="3=1-971"/>
</dbReference>
<dbReference type="PDB" id="8W7S">
    <property type="method" value="EM"/>
    <property type="resolution" value="7.39 A"/>
    <property type="chains" value="3=1-971"/>
</dbReference>
<dbReference type="PDB" id="8XGC">
    <property type="method" value="EM"/>
    <property type="resolution" value="3.70 A"/>
    <property type="chains" value="3=1-971"/>
</dbReference>
<dbReference type="PDB" id="9BCX">
    <property type="method" value="EM"/>
    <property type="resolution" value="6.10 A"/>
    <property type="chains" value="3=1-971"/>
</dbReference>
<dbReference type="PDB" id="9GJP">
    <property type="method" value="EM"/>
    <property type="resolution" value="3.40 A"/>
    <property type="chains" value="3=1-971"/>
</dbReference>
<dbReference type="PDB" id="9GJW">
    <property type="method" value="EM"/>
    <property type="resolution" value="3.30 A"/>
    <property type="chains" value="3=1-971"/>
</dbReference>
<dbReference type="PDB" id="9GM5">
    <property type="method" value="EM"/>
    <property type="resolution" value="3.70 A"/>
    <property type="chains" value="3=1-971"/>
</dbReference>
<dbReference type="PDBsum" id="3JA8"/>
<dbReference type="PDBsum" id="3JC5"/>
<dbReference type="PDBsum" id="3JC6"/>
<dbReference type="PDBsum" id="3JC7"/>
<dbReference type="PDBsum" id="5BK4"/>
<dbReference type="PDBsum" id="5U8S"/>
<dbReference type="PDBsum" id="5U8T"/>
<dbReference type="PDBsum" id="5V8F"/>
<dbReference type="PDBsum" id="5XF8"/>
<dbReference type="PDBsum" id="6EYC"/>
<dbReference type="PDBsum" id="6F0L"/>
<dbReference type="PDBsum" id="6HV9"/>
<dbReference type="PDBsum" id="6PTJ"/>
<dbReference type="PDBsum" id="6PTN"/>
<dbReference type="PDBsum" id="6PTO"/>
<dbReference type="PDBsum" id="6RQC"/>
<dbReference type="PDBsum" id="6SKL"/>
<dbReference type="PDBsum" id="6SKO"/>
<dbReference type="PDBsum" id="6U0M"/>
<dbReference type="PDBsum" id="6WGC"/>
<dbReference type="PDBsum" id="6WGF"/>
<dbReference type="PDBsum" id="6WGG"/>
<dbReference type="PDBsum" id="6WGI"/>
<dbReference type="PDBsum" id="7P30"/>
<dbReference type="PDBsum" id="7P5Z"/>
<dbReference type="PDBsum" id="7PMK"/>
<dbReference type="PDBsum" id="7PMN"/>
<dbReference type="PDBsum" id="7PT6"/>
<dbReference type="PDBsum" id="7PT7"/>
<dbReference type="PDBsum" id="7QHS"/>
<dbReference type="PDBsum" id="7V3U"/>
<dbReference type="PDBsum" id="7V3V"/>
<dbReference type="PDBsum" id="7W8G"/>
<dbReference type="PDBsum" id="7Z13"/>
<dbReference type="PDBsum" id="8B9A"/>
<dbReference type="PDBsum" id="8B9B"/>
<dbReference type="PDBsum" id="8B9C"/>
<dbReference type="PDBsum" id="8KG6"/>
<dbReference type="PDBsum" id="8KG8"/>
<dbReference type="PDBsum" id="8KG9"/>
<dbReference type="PDBsum" id="8P5E"/>
<dbReference type="PDBsum" id="8P62"/>
<dbReference type="PDBsum" id="8P63"/>
<dbReference type="PDBsum" id="8RIF"/>
<dbReference type="PDBsum" id="8RIG"/>
<dbReference type="PDBsum" id="8W7M"/>
<dbReference type="PDBsum" id="8W7S"/>
<dbReference type="PDBsum" id="8XGC"/>
<dbReference type="PDBsum" id="9BCX"/>
<dbReference type="PDBsum" id="9GJP"/>
<dbReference type="PDBsum" id="9GJW"/>
<dbReference type="PDBsum" id="9GM5"/>
<dbReference type="EMDB" id="EMD-0288"/>
<dbReference type="EMDB" id="EMD-10227"/>
<dbReference type="EMDB" id="EMD-10230"/>
<dbReference type="EMDB" id="EMD-13176"/>
<dbReference type="EMDB" id="EMD-13211"/>
<dbReference type="EMDB" id="EMD-13537"/>
<dbReference type="EMDB" id="EMD-13539"/>
<dbReference type="EMDB" id="EMD-13619"/>
<dbReference type="EMDB" id="EMD-13620"/>
<dbReference type="EMDB" id="EMD-13624"/>
<dbReference type="EMDB" id="EMD-13629"/>
<dbReference type="EMDB" id="EMD-13640"/>
<dbReference type="EMDB" id="EMD-13644"/>
<dbReference type="EMDB" id="EMD-13647"/>
<dbReference type="EMDB" id="EMD-13648"/>
<dbReference type="EMDB" id="EMD-13656"/>
<dbReference type="EMDB" id="EMD-13978"/>
<dbReference type="EMDB" id="EMD-14439"/>
<dbReference type="EMDB" id="EMD-15924"/>
<dbReference type="EMDB" id="EMD-17449"/>
<dbReference type="EMDB" id="EMD-17458"/>
<dbReference type="EMDB" id="EMD-17459"/>
<dbReference type="EMDB" id="EMD-19186"/>
<dbReference type="EMDB" id="EMD-19187"/>
<dbReference type="EMDB" id="EMD-20471"/>
<dbReference type="EMDB" id="EMD-20472"/>
<dbReference type="EMDB" id="EMD-20473"/>
<dbReference type="EMDB" id="EMD-20607"/>
<dbReference type="EMDB" id="EMD-21662"/>
<dbReference type="EMDB" id="EMD-21664"/>
<dbReference type="EMDB" id="EMD-21665"/>
<dbReference type="EMDB" id="EMD-21666"/>
<dbReference type="EMDB" id="EMD-31684"/>
<dbReference type="EMDB" id="EMD-31685"/>
<dbReference type="EMDB" id="EMD-32355"/>
<dbReference type="EMDB" id="EMD-37211"/>
<dbReference type="EMDB" id="EMD-37213"/>
<dbReference type="EMDB" id="EMD-37215"/>
<dbReference type="EMDB" id="EMD-37343"/>
<dbReference type="EMDB" id="EMD-37345"/>
<dbReference type="EMDB" id="EMD-38317"/>
<dbReference type="EMDB" id="EMD-4980"/>
<dbReference type="EMDB" id="EMD-51401"/>
<dbReference type="EMDB" id="EMD-51407"/>
<dbReference type="EMDB" id="EMD-51441"/>
<dbReference type="EMDB" id="EMD-6671"/>
<dbReference type="EMDB" id="EMD-8518"/>
<dbReference type="EMDB" id="EMD-8519"/>
<dbReference type="EMDB" id="EMD-8540"/>
<dbReference type="EMDB" id="EMD-9400"/>
<dbReference type="SMR" id="P24279"/>
<dbReference type="BioGRID" id="36697">
    <property type="interactions" value="415"/>
</dbReference>
<dbReference type="ComplexPortal" id="CPX-2944">
    <property type="entry name" value="MCM complex"/>
</dbReference>
<dbReference type="DIP" id="DIP-2407N"/>
<dbReference type="FunCoup" id="P24279">
    <property type="interactions" value="1438"/>
</dbReference>
<dbReference type="IntAct" id="P24279">
    <property type="interactions" value="40"/>
</dbReference>
<dbReference type="MINT" id="P24279"/>
<dbReference type="STRING" id="4932.YEL032W"/>
<dbReference type="GlyGen" id="P24279">
    <property type="glycosylation" value="1 site"/>
</dbReference>
<dbReference type="iPTMnet" id="P24279"/>
<dbReference type="PaxDb" id="4932-YEL032W"/>
<dbReference type="PeptideAtlas" id="P24279"/>
<dbReference type="EnsemblFungi" id="YEL032W_mRNA">
    <property type="protein sequence ID" value="YEL032W"/>
    <property type="gene ID" value="YEL032W"/>
</dbReference>
<dbReference type="GeneID" id="856680"/>
<dbReference type="KEGG" id="sce:YEL032W"/>
<dbReference type="AGR" id="SGD:S000000758"/>
<dbReference type="SGD" id="S000000758">
    <property type="gene designation" value="MCM3"/>
</dbReference>
<dbReference type="VEuPathDB" id="FungiDB:YEL032W"/>
<dbReference type="eggNOG" id="KOG0479">
    <property type="taxonomic scope" value="Eukaryota"/>
</dbReference>
<dbReference type="GeneTree" id="ENSGT01050000244824"/>
<dbReference type="HOGENOM" id="CLU_000995_6_1_1"/>
<dbReference type="InParanoid" id="P24279"/>
<dbReference type="OMA" id="GRFHYRD"/>
<dbReference type="OrthoDB" id="1882346at2759"/>
<dbReference type="BioCyc" id="YEAST:G3O-30154-MONOMER"/>
<dbReference type="Reactome" id="R-SCE-176187">
    <property type="pathway name" value="Activation of ATR in response to replication stress"/>
</dbReference>
<dbReference type="Reactome" id="R-SCE-68867">
    <property type="pathway name" value="Assembly of the pre-replicative complex"/>
</dbReference>
<dbReference type="Reactome" id="R-SCE-68962">
    <property type="pathway name" value="Activation of the pre-replicative complex"/>
</dbReference>
<dbReference type="Reactome" id="R-SCE-69052">
    <property type="pathway name" value="Switching of origins to a post-replicative state"/>
</dbReference>
<dbReference type="BioGRID-ORCS" id="856680">
    <property type="hits" value="4 hits in 10 CRISPR screens"/>
</dbReference>
<dbReference type="EvolutionaryTrace" id="P24279"/>
<dbReference type="PRO" id="PR:P24279"/>
<dbReference type="Proteomes" id="UP000002311">
    <property type="component" value="Chromosome V"/>
</dbReference>
<dbReference type="RNAct" id="P24279">
    <property type="molecule type" value="protein"/>
</dbReference>
<dbReference type="GO" id="GO:0000781">
    <property type="term" value="C:chromosome, telomeric region"/>
    <property type="evidence" value="ECO:0007669"/>
    <property type="project" value="GOC"/>
</dbReference>
<dbReference type="GO" id="GO:0071162">
    <property type="term" value="C:CMG complex"/>
    <property type="evidence" value="ECO:0000314"/>
    <property type="project" value="SGD"/>
</dbReference>
<dbReference type="GO" id="GO:0005737">
    <property type="term" value="C:cytoplasm"/>
    <property type="evidence" value="ECO:0000314"/>
    <property type="project" value="SGD"/>
</dbReference>
<dbReference type="GO" id="GO:0031261">
    <property type="term" value="C:DNA replication preinitiation complex"/>
    <property type="evidence" value="ECO:0000353"/>
    <property type="project" value="SGD"/>
</dbReference>
<dbReference type="GO" id="GO:0042555">
    <property type="term" value="C:MCM complex"/>
    <property type="evidence" value="ECO:0000314"/>
    <property type="project" value="SGD"/>
</dbReference>
<dbReference type="GO" id="GO:0005656">
    <property type="term" value="C:nuclear pre-replicative complex"/>
    <property type="evidence" value="ECO:0000314"/>
    <property type="project" value="SGD"/>
</dbReference>
<dbReference type="GO" id="GO:0043596">
    <property type="term" value="C:nuclear replication fork"/>
    <property type="evidence" value="ECO:0000314"/>
    <property type="project" value="ComplexPortal"/>
</dbReference>
<dbReference type="GO" id="GO:0005654">
    <property type="term" value="C:nucleoplasm"/>
    <property type="evidence" value="ECO:0000304"/>
    <property type="project" value="Reactome"/>
</dbReference>
<dbReference type="GO" id="GO:0005634">
    <property type="term" value="C:nucleus"/>
    <property type="evidence" value="ECO:0000314"/>
    <property type="project" value="SGD"/>
</dbReference>
<dbReference type="GO" id="GO:0031298">
    <property type="term" value="C:replication fork protection complex"/>
    <property type="evidence" value="ECO:0007669"/>
    <property type="project" value="UniProtKB-ARBA"/>
</dbReference>
<dbReference type="GO" id="GO:0005524">
    <property type="term" value="F:ATP binding"/>
    <property type="evidence" value="ECO:0007669"/>
    <property type="project" value="UniProtKB-KW"/>
</dbReference>
<dbReference type="GO" id="GO:0016887">
    <property type="term" value="F:ATP hydrolysis activity"/>
    <property type="evidence" value="ECO:0007669"/>
    <property type="project" value="InterPro"/>
</dbReference>
<dbReference type="GO" id="GO:0003682">
    <property type="term" value="F:chromatin binding"/>
    <property type="evidence" value="ECO:0000314"/>
    <property type="project" value="SGD"/>
</dbReference>
<dbReference type="GO" id="GO:0003688">
    <property type="term" value="F:DNA replication origin binding"/>
    <property type="evidence" value="ECO:0000314"/>
    <property type="project" value="SGD"/>
</dbReference>
<dbReference type="GO" id="GO:0004386">
    <property type="term" value="F:helicase activity"/>
    <property type="evidence" value="ECO:0007669"/>
    <property type="project" value="UniProtKB-KW"/>
</dbReference>
<dbReference type="GO" id="GO:1904931">
    <property type="term" value="F:MCM complex binding"/>
    <property type="evidence" value="ECO:0000314"/>
    <property type="project" value="SGD"/>
</dbReference>
<dbReference type="GO" id="GO:0003697">
    <property type="term" value="F:single-stranded DNA binding"/>
    <property type="evidence" value="ECO:0000318"/>
    <property type="project" value="GO_Central"/>
</dbReference>
<dbReference type="GO" id="GO:0006270">
    <property type="term" value="P:DNA replication initiation"/>
    <property type="evidence" value="ECO:0000315"/>
    <property type="project" value="SGD"/>
</dbReference>
<dbReference type="GO" id="GO:0006271">
    <property type="term" value="P:DNA strand elongation involved in DNA replication"/>
    <property type="evidence" value="ECO:0000315"/>
    <property type="project" value="SGD"/>
</dbReference>
<dbReference type="GO" id="GO:0000727">
    <property type="term" value="P:double-strand break repair via break-induced replication"/>
    <property type="evidence" value="ECO:0000315"/>
    <property type="project" value="SGD"/>
</dbReference>
<dbReference type="GO" id="GO:1902975">
    <property type="term" value="P:mitotic DNA replication initiation"/>
    <property type="evidence" value="ECO:0000315"/>
    <property type="project" value="SGD"/>
</dbReference>
<dbReference type="GO" id="GO:0006267">
    <property type="term" value="P:pre-replicative complex assembly involved in nuclear cell cycle DNA replication"/>
    <property type="evidence" value="ECO:0000314"/>
    <property type="project" value="SGD"/>
</dbReference>
<dbReference type="GO" id="GO:0006279">
    <property type="term" value="P:premeiotic DNA replication"/>
    <property type="evidence" value="ECO:0000314"/>
    <property type="project" value="ComplexPortal"/>
</dbReference>
<dbReference type="GO" id="GO:0030466">
    <property type="term" value="P:silent mating-type cassette heterochromatin formation"/>
    <property type="evidence" value="ECO:0000315"/>
    <property type="project" value="SGD"/>
</dbReference>
<dbReference type="GO" id="GO:0031509">
    <property type="term" value="P:subtelomeric heterochromatin formation"/>
    <property type="evidence" value="ECO:0000315"/>
    <property type="project" value="SGD"/>
</dbReference>
<dbReference type="CDD" id="cd17754">
    <property type="entry name" value="MCM3"/>
    <property type="match status" value="1"/>
</dbReference>
<dbReference type="Gene3D" id="2.20.28.10">
    <property type="match status" value="1"/>
</dbReference>
<dbReference type="Gene3D" id="3.30.1640.10">
    <property type="entry name" value="mini-chromosome maintenance (MCM) complex, chain A, domain 1"/>
    <property type="match status" value="1"/>
</dbReference>
<dbReference type="Gene3D" id="2.40.50.140">
    <property type="entry name" value="Nucleic acid-binding proteins"/>
    <property type="match status" value="1"/>
</dbReference>
<dbReference type="Gene3D" id="3.40.50.300">
    <property type="entry name" value="P-loop containing nucleotide triphosphate hydrolases"/>
    <property type="match status" value="1"/>
</dbReference>
<dbReference type="InterPro" id="IPR003593">
    <property type="entry name" value="AAA+_ATPase"/>
</dbReference>
<dbReference type="InterPro" id="IPR031327">
    <property type="entry name" value="MCM"/>
</dbReference>
<dbReference type="InterPro" id="IPR008046">
    <property type="entry name" value="Mcm3"/>
</dbReference>
<dbReference type="InterPro" id="IPR054007">
    <property type="entry name" value="MCM3_WHD"/>
</dbReference>
<dbReference type="InterPro" id="IPR018525">
    <property type="entry name" value="MCM_CS"/>
</dbReference>
<dbReference type="InterPro" id="IPR001208">
    <property type="entry name" value="MCM_dom"/>
</dbReference>
<dbReference type="InterPro" id="IPR041562">
    <property type="entry name" value="MCM_lid"/>
</dbReference>
<dbReference type="InterPro" id="IPR027925">
    <property type="entry name" value="MCM_N"/>
</dbReference>
<dbReference type="InterPro" id="IPR033762">
    <property type="entry name" value="MCM_OB"/>
</dbReference>
<dbReference type="InterPro" id="IPR012340">
    <property type="entry name" value="NA-bd_OB-fold"/>
</dbReference>
<dbReference type="InterPro" id="IPR027417">
    <property type="entry name" value="P-loop_NTPase"/>
</dbReference>
<dbReference type="InterPro" id="IPR056575">
    <property type="entry name" value="WH_MCM3_C"/>
</dbReference>
<dbReference type="PANTHER" id="PTHR11630">
    <property type="entry name" value="DNA REPLICATION LICENSING FACTOR MCM FAMILY MEMBER"/>
    <property type="match status" value="1"/>
</dbReference>
<dbReference type="PANTHER" id="PTHR11630:SF46">
    <property type="entry name" value="DNA REPLICATION LICENSING FACTOR MCM3-RELATED"/>
    <property type="match status" value="1"/>
</dbReference>
<dbReference type="Pfam" id="PF00493">
    <property type="entry name" value="MCM"/>
    <property type="match status" value="1"/>
</dbReference>
<dbReference type="Pfam" id="PF22207">
    <property type="entry name" value="MCM3_WHD"/>
    <property type="match status" value="1"/>
</dbReference>
<dbReference type="Pfam" id="PF17855">
    <property type="entry name" value="MCM_lid"/>
    <property type="match status" value="1"/>
</dbReference>
<dbReference type="Pfam" id="PF14551">
    <property type="entry name" value="MCM_N"/>
    <property type="match status" value="1"/>
</dbReference>
<dbReference type="Pfam" id="PF17207">
    <property type="entry name" value="MCM_OB"/>
    <property type="match status" value="1"/>
</dbReference>
<dbReference type="Pfam" id="PF23191">
    <property type="entry name" value="WH_MCM3_C"/>
    <property type="match status" value="1"/>
</dbReference>
<dbReference type="PRINTS" id="PR01657">
    <property type="entry name" value="MCMFAMILY"/>
</dbReference>
<dbReference type="PRINTS" id="PR01659">
    <property type="entry name" value="MCMPROTEIN3"/>
</dbReference>
<dbReference type="SMART" id="SM00382">
    <property type="entry name" value="AAA"/>
    <property type="match status" value="1"/>
</dbReference>
<dbReference type="SMART" id="SM00350">
    <property type="entry name" value="MCM"/>
    <property type="match status" value="1"/>
</dbReference>
<dbReference type="SUPFAM" id="SSF50249">
    <property type="entry name" value="Nucleic acid-binding proteins"/>
    <property type="match status" value="1"/>
</dbReference>
<dbReference type="SUPFAM" id="SSF52540">
    <property type="entry name" value="P-loop containing nucleoside triphosphate hydrolases"/>
    <property type="match status" value="1"/>
</dbReference>
<dbReference type="PROSITE" id="PS00847">
    <property type="entry name" value="MCM_1"/>
    <property type="match status" value="1"/>
</dbReference>
<dbReference type="PROSITE" id="PS50051">
    <property type="entry name" value="MCM_2"/>
    <property type="match status" value="1"/>
</dbReference>
<gene>
    <name type="primary">MCM3</name>
    <name type="ordered locus">YEL032W</name>
    <name type="ORF">SYGP-ORF23</name>
</gene>
<protein>
    <recommendedName>
        <fullName>DNA replication licensing factor MCM3</fullName>
        <ecNumber>3.6.4.12</ecNumber>
    </recommendedName>
    <alternativeName>
        <fullName>Minichromosome maintenance protein 3</fullName>
    </alternativeName>
</protein>
<evidence type="ECO:0000255" key="1"/>
<evidence type="ECO:0000256" key="2">
    <source>
        <dbReference type="SAM" id="MobiDB-lite"/>
    </source>
</evidence>
<evidence type="ECO:0000269" key="3">
    <source>
    </source>
</evidence>
<evidence type="ECO:0000269" key="4">
    <source>
    </source>
</evidence>
<evidence type="ECO:0000269" key="5">
    <source>
    </source>
</evidence>
<evidence type="ECO:0000269" key="6">
    <source>
    </source>
</evidence>
<evidence type="ECO:0000269" key="7">
    <source>
    </source>
</evidence>
<evidence type="ECO:0000305" key="8"/>
<evidence type="ECO:0007744" key="9">
    <source>
    </source>
</evidence>
<evidence type="ECO:0007744" key="10">
    <source>
    </source>
</evidence>
<evidence type="ECO:0007744" key="11">
    <source>
    </source>
</evidence>
<evidence type="ECO:0007829" key="12">
    <source>
        <dbReference type="PDB" id="6SKO"/>
    </source>
</evidence>
<evidence type="ECO:0007829" key="13">
    <source>
        <dbReference type="PDB" id="7PMK"/>
    </source>
</evidence>
<organism>
    <name type="scientific">Saccharomyces cerevisiae (strain ATCC 204508 / S288c)</name>
    <name type="common">Baker's yeast</name>
    <dbReference type="NCBI Taxonomy" id="559292"/>
    <lineage>
        <taxon>Eukaryota</taxon>
        <taxon>Fungi</taxon>
        <taxon>Dikarya</taxon>
        <taxon>Ascomycota</taxon>
        <taxon>Saccharomycotina</taxon>
        <taxon>Saccharomycetes</taxon>
        <taxon>Saccharomycetales</taxon>
        <taxon>Saccharomycetaceae</taxon>
        <taxon>Saccharomyces</taxon>
    </lineage>
</organism>
<proteinExistence type="evidence at protein level"/>
<comment type="function">
    <text evidence="6 7">Acts as a component of the MCM2-7 complex (MCM complex) which is the putative replicative helicase essential for 'once per cell cycle' DNA replication initiation and elongation in eukaryotic cells. The active ATPase sites in the MCM2-7 ring are formed through the interaction surfaces of two neighboring subunits such that a critical structure of a conserved arginine finger motif is provided in trans relative to the ATP-binding site of the Walker A box of the adjacent subunit. The six ATPase active sites, however, are likely to contribute differentially to the complex helicase activity. Once loaded onto DNA, double hexamers can slide on dsDNA in the absence of ATPase activity. Necessary for cell growth.</text>
</comment>
<comment type="catalytic activity">
    <reaction>
        <text>ATP + H2O = ADP + phosphate + H(+)</text>
        <dbReference type="Rhea" id="RHEA:13065"/>
        <dbReference type="ChEBI" id="CHEBI:15377"/>
        <dbReference type="ChEBI" id="CHEBI:15378"/>
        <dbReference type="ChEBI" id="CHEBI:30616"/>
        <dbReference type="ChEBI" id="CHEBI:43474"/>
        <dbReference type="ChEBI" id="CHEBI:456216"/>
        <dbReference type="EC" id="3.6.4.12"/>
    </reaction>
</comment>
<comment type="subunit">
    <text evidence="4 6 7">Component of the MCM2-7 complex. The complex forms a toroidal hexameric ring with the proposed subunit order MCM2-MCM6-MCM4-MCM7-MCM3-MCM5; loaded onto DNA, forms a head-head double hexamer. Interacts with CSM1.</text>
</comment>
<comment type="interaction">
    <interactant intactId="EBI-10541">
        <id>P24279</id>
    </interactant>
    <interactant intactId="EBI-22001">
        <id>P25651</id>
        <label>CSM1</label>
    </interactant>
    <organismsDiffer>false</organismsDiffer>
    <experiments>2</experiments>
</comment>
<comment type="interaction">
    <interactant intactId="EBI-10541">
        <id>P24279</id>
    </interactant>
    <interactant intactId="EBI-5965">
        <id>P32354</id>
        <label>MCM10</label>
    </interactant>
    <organismsDiffer>false</organismsDiffer>
    <experiments>2</experiments>
</comment>
<comment type="interaction">
    <interactant intactId="EBI-10541">
        <id>P24279</id>
    </interactant>
    <interactant intactId="EBI-10549">
        <id>P29496</id>
        <label>MCM5</label>
    </interactant>
    <organismsDiffer>false</organismsDiffer>
    <experiments>6</experiments>
</comment>
<comment type="interaction">
    <interactant intactId="EBI-10541">
        <id>P24279</id>
    </interactant>
    <interactant intactId="EBI-4300">
        <id>P38132</id>
        <label>MCM7</label>
    </interactant>
    <organismsDiffer>false</organismsDiffer>
    <experiments>3</experiments>
</comment>
<comment type="interaction">
    <interactant intactId="EBI-10541">
        <id>P24279</id>
    </interactant>
    <interactant intactId="EBI-17490">
        <id>Q12306</id>
        <label>SMT3</label>
    </interactant>
    <organismsDiffer>false</organismsDiffer>
    <experiments>2</experiments>
</comment>
<comment type="subcellular location">
    <subcellularLocation>
        <location>Nucleus</location>
    </subcellularLocation>
</comment>
<comment type="miscellaneous">
    <text evidence="3">Present with 35100 molecules/cell in log phase SD medium.</text>
</comment>
<comment type="miscellaneous">
    <text>Early fractionation of eukaryotic MCM proteins yielded a variety of dimeric, trimeric and tetrameric complexes with unclear biological significance. The MCM2-7 hexamer is the proposed physiological active complex.</text>
</comment>
<comment type="similarity">
    <text evidence="8">Belongs to the MCM family.</text>
</comment>
<sequence>MEGSTGFDGDATTFFAPDAVFGDRVRRFQEFLDTFTSYRDSVRSIQVYNSNNAANYNDDQDDADERDLLGDDDGDDLEKEKKAASSTSLNILPHRIIISLDDLREFDRSFWSGILVEPAYFIPPAEKALTDLADSMDDVPHPNASAVSSRHPWKLSFKGSFGAHALSPRTLTAQHLNKLVSVEGIVTKTSLVRPKLIRSVHYAAKTGRFHYRDYTDATTTLTTRIPTPAIYPTEDTEGNKLTTEYGYSTFIDHQRITVQEMPEMAPAGQLPRSIDVILDDDLVDKTKPGDRVNVVGVFKSLGAGGMNQSNSNTLIGFKTLILGNTVYPLHARSTGVAARQMLTDFDIRNINKLSKKKDIFDILSQSLAPSIYGHDHIKKAILLMLMGGVEKNLENGSHLRGDINILMVGDPSTAKSQLLRFVLNTASLAIATTGRGSSGVGLTAAVTTDRETGERRLEAGAMVLADRGVVCIDEFDKMTDVDRVAIHEVMEQQTVTIAKAGIHTTLNARCSVIAAANPVFGQYDVNRDPHQNIALPDSLLSRFDLLFVVTDDINEIRDRSISEHVLRTHRYLPPGYLEGEPVRERLNLSLAVGEDADINPEEHSNSGAGVENEGEDDEDHVFEKFNPLLQAGAKLAKNKGNYNGTEIPKLVTIPFLRKYVQYAKERVIPQLTQEAINVIVKNYTDLRNDDNTKKSPITARTLETLIRLATAHAKVRLSKTVNKVDAKVAANLLRFALLGEDIGNDIDEEESEYEEALSKRSPQKSPKKRQRVRQPASNSGSPIKSTPRRSTASSVNATPSSARRILRFQDDEQNAGEDDNDIMSPLPADEEAELQRRLQLGLRVSPRRREHLHAPEEGSSGPLTEVGTPRLPNVSSAGQDDEQQQSVISFDNVEPGTISTGRLSLISGIIARLMQTEIFEEESYPVASLFERINEELPEEEKFSAQEYLAGLKIMSDRNNLMVADDKVWRV</sequence>
<feature type="chain" id="PRO_0000194099" description="DNA replication licensing factor MCM3">
    <location>
        <begin position="1"/>
        <end position="971"/>
    </location>
</feature>
<feature type="domain" description="MCM">
    <location>
        <begin position="359"/>
        <end position="566"/>
    </location>
</feature>
<feature type="region of interest" description="Disordered" evidence="2">
    <location>
        <begin position="52"/>
        <end position="78"/>
    </location>
</feature>
<feature type="region of interest" description="Disordered" evidence="2">
    <location>
        <begin position="594"/>
        <end position="614"/>
    </location>
</feature>
<feature type="region of interest" description="Disordered" evidence="2">
    <location>
        <begin position="749"/>
        <end position="825"/>
    </location>
</feature>
<feature type="region of interest" description="Disordered" evidence="2">
    <location>
        <begin position="842"/>
        <end position="893"/>
    </location>
</feature>
<feature type="short sequence motif" description="Arginine finger">
    <location>
        <begin position="541"/>
        <end position="544"/>
    </location>
</feature>
<feature type="compositionally biased region" description="Acidic residues" evidence="2">
    <location>
        <begin position="58"/>
        <end position="77"/>
    </location>
</feature>
<feature type="compositionally biased region" description="Basic residues" evidence="2">
    <location>
        <begin position="761"/>
        <end position="772"/>
    </location>
</feature>
<feature type="compositionally biased region" description="Polar residues" evidence="2">
    <location>
        <begin position="775"/>
        <end position="801"/>
    </location>
</feature>
<feature type="compositionally biased region" description="Acidic residues" evidence="2">
    <location>
        <begin position="811"/>
        <end position="821"/>
    </location>
</feature>
<feature type="compositionally biased region" description="Polar residues" evidence="2">
    <location>
        <begin position="873"/>
        <end position="889"/>
    </location>
</feature>
<feature type="binding site" evidence="1">
    <location>
        <begin position="409"/>
        <end position="416"/>
    </location>
    <ligand>
        <name>ATP</name>
        <dbReference type="ChEBI" id="CHEBI:30616"/>
    </ligand>
</feature>
<feature type="modified residue" description="Phosphoserine" evidence="11">
    <location>
        <position position="761"/>
    </location>
</feature>
<feature type="modified residue" description="Phosphoserine" evidence="9">
    <location>
        <position position="777"/>
    </location>
</feature>
<feature type="modified residue" description="Phosphoserine" evidence="9 11">
    <location>
        <position position="781"/>
    </location>
</feature>
<feature type="modified residue" description="Phosphothreonine" evidence="10">
    <location>
        <position position="868"/>
    </location>
</feature>
<feature type="mutagenesis site" description="No effect on MCM2-7 complex helicase activity. Loss of MCM2-7 complex helicase activity; when associated with MCM5 A-422. Reduces MCM2-7 complex helicase activity; when associated with MCM2 A-549." evidence="5">
    <original>K</original>
    <variation>A</variation>
    <location>
        <position position="415"/>
    </location>
</feature>
<feature type="helix" evidence="13">
    <location>
        <begin position="17"/>
        <end position="34"/>
    </location>
</feature>
<feature type="helix" evidence="13">
    <location>
        <begin position="37"/>
        <end position="54"/>
    </location>
</feature>
<feature type="strand" evidence="13">
    <location>
        <begin position="94"/>
        <end position="99"/>
    </location>
</feature>
<feature type="helix" evidence="13">
    <location>
        <begin position="100"/>
        <end position="106"/>
    </location>
</feature>
<feature type="helix" evidence="13">
    <location>
        <begin position="108"/>
        <end position="116"/>
    </location>
</feature>
<feature type="helix" evidence="13">
    <location>
        <begin position="118"/>
        <end position="135"/>
    </location>
</feature>
<feature type="strand" evidence="13">
    <location>
        <begin position="154"/>
        <end position="159"/>
    </location>
</feature>
<feature type="helix" evidence="13">
    <location>
        <begin position="162"/>
        <end position="164"/>
    </location>
</feature>
<feature type="turn" evidence="13">
    <location>
        <begin position="168"/>
        <end position="170"/>
    </location>
</feature>
<feature type="helix" evidence="13">
    <location>
        <begin position="173"/>
        <end position="175"/>
    </location>
</feature>
<feature type="strand" evidence="13">
    <location>
        <begin position="178"/>
        <end position="187"/>
    </location>
</feature>
<feature type="strand" evidence="13">
    <location>
        <begin position="193"/>
        <end position="203"/>
    </location>
</feature>
<feature type="turn" evidence="13">
    <location>
        <begin position="204"/>
        <end position="206"/>
    </location>
</feature>
<feature type="strand" evidence="13">
    <location>
        <begin position="209"/>
        <end position="213"/>
    </location>
</feature>
<feature type="turn" evidence="13">
    <location>
        <begin position="217"/>
        <end position="219"/>
    </location>
</feature>
<feature type="strand" evidence="13">
    <location>
        <begin position="240"/>
        <end position="243"/>
    </location>
</feature>
<feature type="turn" evidence="13">
    <location>
        <begin position="245"/>
        <end position="247"/>
    </location>
</feature>
<feature type="strand" evidence="13">
    <location>
        <begin position="248"/>
        <end position="259"/>
    </location>
</feature>
<feature type="turn" evidence="13">
    <location>
        <begin position="262"/>
        <end position="264"/>
    </location>
</feature>
<feature type="strand" evidence="13">
    <location>
        <begin position="273"/>
        <end position="279"/>
    </location>
</feature>
<feature type="helix" evidence="13">
    <location>
        <begin position="280"/>
        <end position="282"/>
    </location>
</feature>
<feature type="strand" evidence="13">
    <location>
        <begin position="291"/>
        <end position="302"/>
    </location>
</feature>
<feature type="strand" evidence="13">
    <location>
        <begin position="317"/>
        <end position="328"/>
    </location>
</feature>
<feature type="helix" evidence="13">
    <location>
        <begin position="344"/>
        <end position="354"/>
    </location>
</feature>
<feature type="helix" evidence="13">
    <location>
        <begin position="359"/>
        <end position="366"/>
    </location>
</feature>
<feature type="helix" evidence="13">
    <location>
        <begin position="375"/>
        <end position="385"/>
    </location>
</feature>
<feature type="helix" evidence="13">
    <location>
        <begin position="394"/>
        <end position="396"/>
    </location>
</feature>
<feature type="strand" evidence="13">
    <location>
        <begin position="405"/>
        <end position="409"/>
    </location>
</feature>
<feature type="helix" evidence="13">
    <location>
        <begin position="415"/>
        <end position="425"/>
    </location>
</feature>
<feature type="strand" evidence="13">
    <location>
        <begin position="426"/>
        <end position="433"/>
    </location>
</feature>
<feature type="turn" evidence="13">
    <location>
        <begin position="434"/>
        <end position="436"/>
    </location>
</feature>
<feature type="helix" evidence="13">
    <location>
        <begin position="439"/>
        <end position="442"/>
    </location>
</feature>
<feature type="strand" evidence="13">
    <location>
        <begin position="443"/>
        <end position="448"/>
    </location>
</feature>
<feature type="turn" evidence="13">
    <location>
        <begin position="450"/>
        <end position="452"/>
    </location>
</feature>
<feature type="strand" evidence="13">
    <location>
        <begin position="455"/>
        <end position="459"/>
    </location>
</feature>
<feature type="helix" evidence="13">
    <location>
        <begin position="461"/>
        <end position="464"/>
    </location>
</feature>
<feature type="turn" evidence="13">
    <location>
        <begin position="465"/>
        <end position="467"/>
    </location>
</feature>
<feature type="strand" evidence="13">
    <location>
        <begin position="468"/>
        <end position="474"/>
    </location>
</feature>
<feature type="helix" evidence="13">
    <location>
        <begin position="475"/>
        <end position="477"/>
    </location>
</feature>
<feature type="helix" evidence="13">
    <location>
        <begin position="480"/>
        <end position="483"/>
    </location>
</feature>
<feature type="turn" evidence="13">
    <location>
        <begin position="484"/>
        <end position="486"/>
    </location>
</feature>
<feature type="helix" evidence="13">
    <location>
        <begin position="487"/>
        <end position="492"/>
    </location>
</feature>
<feature type="strand" evidence="13">
    <location>
        <begin position="493"/>
        <end position="499"/>
    </location>
</feature>
<feature type="strand" evidence="13">
    <location>
        <begin position="502"/>
        <end position="507"/>
    </location>
</feature>
<feature type="strand" evidence="13">
    <location>
        <begin position="510"/>
        <end position="516"/>
    </location>
</feature>
<feature type="strand" evidence="13">
    <location>
        <begin position="519"/>
        <end position="522"/>
    </location>
</feature>
<feature type="helix" evidence="13">
    <location>
        <begin position="529"/>
        <end position="532"/>
    </location>
</feature>
<feature type="helix" evidence="13">
    <location>
        <begin position="537"/>
        <end position="540"/>
    </location>
</feature>
<feature type="strand" evidence="13">
    <location>
        <begin position="543"/>
        <end position="549"/>
    </location>
</feature>
<feature type="helix" evidence="13">
    <location>
        <begin position="555"/>
        <end position="569"/>
    </location>
</feature>
<feature type="helix" evidence="13">
    <location>
        <begin position="653"/>
        <end position="666"/>
    </location>
</feature>
<feature type="helix" evidence="13">
    <location>
        <begin position="673"/>
        <end position="687"/>
    </location>
</feature>
<feature type="helix" evidence="13">
    <location>
        <begin position="700"/>
        <end position="715"/>
    </location>
</feature>
<feature type="strand" evidence="12">
    <location>
        <begin position="719"/>
        <end position="721"/>
    </location>
</feature>
<feature type="helix" evidence="13">
    <location>
        <begin position="723"/>
        <end position="738"/>
    </location>
</feature>
<keyword id="KW-0002">3D-structure</keyword>
<keyword id="KW-0067">ATP-binding</keyword>
<keyword id="KW-0235">DNA replication</keyword>
<keyword id="KW-0238">DNA-binding</keyword>
<keyword id="KW-0347">Helicase</keyword>
<keyword id="KW-0378">Hydrolase</keyword>
<keyword id="KW-0547">Nucleotide-binding</keyword>
<keyword id="KW-0539">Nucleus</keyword>
<keyword id="KW-0597">Phosphoprotein</keyword>
<keyword id="KW-1185">Reference proteome</keyword>